<feature type="chain" id="PRO_1000078898" description="Small ribosomal subunit protein uS2">
    <location>
        <begin position="1"/>
        <end position="295"/>
    </location>
</feature>
<feature type="region of interest" description="Disordered" evidence="2">
    <location>
        <begin position="232"/>
        <end position="295"/>
    </location>
</feature>
<feature type="compositionally biased region" description="Basic and acidic residues" evidence="2">
    <location>
        <begin position="252"/>
        <end position="287"/>
    </location>
</feature>
<proteinExistence type="inferred from homology"/>
<reference key="1">
    <citation type="journal article" date="2007" name="Proc. Natl. Acad. Sci. U.S.A.">
        <title>Genome sequencing reveals complex secondary metabolome in the marine actinomycete Salinispora tropica.</title>
        <authorList>
            <person name="Udwary D.W."/>
            <person name="Zeigler L."/>
            <person name="Asolkar R.N."/>
            <person name="Singan V."/>
            <person name="Lapidus A."/>
            <person name="Fenical W."/>
            <person name="Jensen P.R."/>
            <person name="Moore B.S."/>
        </authorList>
    </citation>
    <scope>NUCLEOTIDE SEQUENCE [LARGE SCALE GENOMIC DNA]</scope>
    <source>
        <strain>ATCC BAA-916 / DSM 44818 / JCM 13857 / NBRC 105044 / CNB-440</strain>
    </source>
</reference>
<protein>
    <recommendedName>
        <fullName evidence="1">Small ribosomal subunit protein uS2</fullName>
    </recommendedName>
    <alternativeName>
        <fullName evidence="3">30S ribosomal protein S2</fullName>
    </alternativeName>
</protein>
<name>RS2_SALTO</name>
<keyword id="KW-1185">Reference proteome</keyword>
<keyword id="KW-0687">Ribonucleoprotein</keyword>
<keyword id="KW-0689">Ribosomal protein</keyword>
<evidence type="ECO:0000255" key="1">
    <source>
        <dbReference type="HAMAP-Rule" id="MF_00291"/>
    </source>
</evidence>
<evidence type="ECO:0000256" key="2">
    <source>
        <dbReference type="SAM" id="MobiDB-lite"/>
    </source>
</evidence>
<evidence type="ECO:0000305" key="3"/>
<sequence length="295" mass="32854">MAVVTMRQLLESGVHFGHQTRRWNPKMKRFIFTERNGIYIIDLRQTLDYIEKAYEFVRGTVAEGGSILFVGTKKQAQEAIAEQATRVGQPYVNHRWLGGMLTNFQTVYKRLQRMKELEALGDLSGTAAGYTKKETLQLNREKGKLSRTLGGLRDMQKLPAAIWVVDTKKEHIAVDEARKLGIPVIAVLDTNCDPDEVDYPIPGNDDAIRSAELLTKVVAAAVADGLIARSGRRRGTDEKPEAGVATDEPLAEWERELLEEPKKSDEQPAKSDELPVKTDEQPTKSDEQPAAAAAE</sequence>
<organism>
    <name type="scientific">Salinispora tropica (strain ATCC BAA-916 / DSM 44818 / JCM 13857 / NBRC 105044 / CNB-440)</name>
    <dbReference type="NCBI Taxonomy" id="369723"/>
    <lineage>
        <taxon>Bacteria</taxon>
        <taxon>Bacillati</taxon>
        <taxon>Actinomycetota</taxon>
        <taxon>Actinomycetes</taxon>
        <taxon>Micromonosporales</taxon>
        <taxon>Micromonosporaceae</taxon>
        <taxon>Salinispora</taxon>
    </lineage>
</organism>
<accession>A4X4J2</accession>
<comment type="similarity">
    <text evidence="1">Belongs to the universal ribosomal protein uS2 family.</text>
</comment>
<dbReference type="EMBL" id="CP000667">
    <property type="protein sequence ID" value="ABP53792.1"/>
    <property type="molecule type" value="Genomic_DNA"/>
</dbReference>
<dbReference type="RefSeq" id="WP_011905224.1">
    <property type="nucleotide sequence ID" value="NC_009380.1"/>
</dbReference>
<dbReference type="SMR" id="A4X4J2"/>
<dbReference type="STRING" id="369723.Strop_1322"/>
<dbReference type="KEGG" id="stp:Strop_1322"/>
<dbReference type="PATRIC" id="fig|369723.5.peg.1348"/>
<dbReference type="eggNOG" id="COG0052">
    <property type="taxonomic scope" value="Bacteria"/>
</dbReference>
<dbReference type="HOGENOM" id="CLU_040318_2_2_11"/>
<dbReference type="Proteomes" id="UP000000235">
    <property type="component" value="Chromosome"/>
</dbReference>
<dbReference type="GO" id="GO:0022627">
    <property type="term" value="C:cytosolic small ribosomal subunit"/>
    <property type="evidence" value="ECO:0007669"/>
    <property type="project" value="TreeGrafter"/>
</dbReference>
<dbReference type="GO" id="GO:0003735">
    <property type="term" value="F:structural constituent of ribosome"/>
    <property type="evidence" value="ECO:0007669"/>
    <property type="project" value="InterPro"/>
</dbReference>
<dbReference type="GO" id="GO:0006412">
    <property type="term" value="P:translation"/>
    <property type="evidence" value="ECO:0007669"/>
    <property type="project" value="UniProtKB-UniRule"/>
</dbReference>
<dbReference type="CDD" id="cd01425">
    <property type="entry name" value="RPS2"/>
    <property type="match status" value="1"/>
</dbReference>
<dbReference type="FunFam" id="1.10.287.610:FF:000001">
    <property type="entry name" value="30S ribosomal protein S2"/>
    <property type="match status" value="1"/>
</dbReference>
<dbReference type="Gene3D" id="3.40.50.10490">
    <property type="entry name" value="Glucose-6-phosphate isomerase like protein, domain 1"/>
    <property type="match status" value="1"/>
</dbReference>
<dbReference type="Gene3D" id="1.10.287.610">
    <property type="entry name" value="Helix hairpin bin"/>
    <property type="match status" value="1"/>
</dbReference>
<dbReference type="HAMAP" id="MF_00291_B">
    <property type="entry name" value="Ribosomal_uS2_B"/>
    <property type="match status" value="1"/>
</dbReference>
<dbReference type="InterPro" id="IPR001865">
    <property type="entry name" value="Ribosomal_uS2"/>
</dbReference>
<dbReference type="InterPro" id="IPR005706">
    <property type="entry name" value="Ribosomal_uS2_bac/mit/plastid"/>
</dbReference>
<dbReference type="InterPro" id="IPR018130">
    <property type="entry name" value="Ribosomal_uS2_CS"/>
</dbReference>
<dbReference type="InterPro" id="IPR023591">
    <property type="entry name" value="Ribosomal_uS2_flav_dom_sf"/>
</dbReference>
<dbReference type="NCBIfam" id="TIGR01011">
    <property type="entry name" value="rpsB_bact"/>
    <property type="match status" value="1"/>
</dbReference>
<dbReference type="PANTHER" id="PTHR12534">
    <property type="entry name" value="30S RIBOSOMAL PROTEIN S2 PROKARYOTIC AND ORGANELLAR"/>
    <property type="match status" value="1"/>
</dbReference>
<dbReference type="PANTHER" id="PTHR12534:SF0">
    <property type="entry name" value="SMALL RIBOSOMAL SUBUNIT PROTEIN US2M"/>
    <property type="match status" value="1"/>
</dbReference>
<dbReference type="Pfam" id="PF00318">
    <property type="entry name" value="Ribosomal_S2"/>
    <property type="match status" value="1"/>
</dbReference>
<dbReference type="PRINTS" id="PR00395">
    <property type="entry name" value="RIBOSOMALS2"/>
</dbReference>
<dbReference type="SUPFAM" id="SSF52313">
    <property type="entry name" value="Ribosomal protein S2"/>
    <property type="match status" value="1"/>
</dbReference>
<dbReference type="PROSITE" id="PS00962">
    <property type="entry name" value="RIBOSOMAL_S2_1"/>
    <property type="match status" value="1"/>
</dbReference>
<gene>
    <name evidence="1" type="primary">rpsB</name>
    <name type="ordered locus">Strop_1322</name>
</gene>